<feature type="chain" id="PRO_0000241388" description="Large ribosomal subunit protein uL3">
    <location>
        <begin position="1"/>
        <end position="211"/>
    </location>
</feature>
<feature type="region of interest" description="Disordered" evidence="2">
    <location>
        <begin position="135"/>
        <end position="155"/>
    </location>
</feature>
<feature type="modified residue" description="N5-methylglutamine" evidence="1">
    <location>
        <position position="152"/>
    </location>
</feature>
<organism>
    <name type="scientific">Pseudoalteromonas translucida (strain TAC 125)</name>
    <dbReference type="NCBI Taxonomy" id="326442"/>
    <lineage>
        <taxon>Bacteria</taxon>
        <taxon>Pseudomonadati</taxon>
        <taxon>Pseudomonadota</taxon>
        <taxon>Gammaproteobacteria</taxon>
        <taxon>Alteromonadales</taxon>
        <taxon>Pseudoalteromonadaceae</taxon>
        <taxon>Pseudoalteromonas</taxon>
    </lineage>
</organism>
<protein>
    <recommendedName>
        <fullName evidence="1">Large ribosomal subunit protein uL3</fullName>
    </recommendedName>
    <alternativeName>
        <fullName evidence="3">50S ribosomal protein L3</fullName>
    </alternativeName>
</protein>
<comment type="function">
    <text evidence="1">One of the primary rRNA binding proteins, it binds directly near the 3'-end of the 23S rRNA, where it nucleates assembly of the 50S subunit.</text>
</comment>
<comment type="subunit">
    <text evidence="1">Part of the 50S ribosomal subunit. Forms a cluster with proteins L14 and L19.</text>
</comment>
<comment type="PTM">
    <text evidence="1">Methylated by PrmB.</text>
</comment>
<comment type="similarity">
    <text evidence="1">Belongs to the universal ribosomal protein uL3 family.</text>
</comment>
<evidence type="ECO:0000255" key="1">
    <source>
        <dbReference type="HAMAP-Rule" id="MF_01325"/>
    </source>
</evidence>
<evidence type="ECO:0000256" key="2">
    <source>
        <dbReference type="SAM" id="MobiDB-lite"/>
    </source>
</evidence>
<evidence type="ECO:0000305" key="3"/>
<proteinExistence type="inferred from homology"/>
<name>RL3_PSET1</name>
<reference key="1">
    <citation type="journal article" date="2005" name="Genome Res.">
        <title>Coping with cold: the genome of the versatile marine Antarctica bacterium Pseudoalteromonas haloplanktis TAC125.</title>
        <authorList>
            <person name="Medigue C."/>
            <person name="Krin E."/>
            <person name="Pascal G."/>
            <person name="Barbe V."/>
            <person name="Bernsel A."/>
            <person name="Bertin P.N."/>
            <person name="Cheung F."/>
            <person name="Cruveiller S."/>
            <person name="D'Amico S."/>
            <person name="Duilio A."/>
            <person name="Fang G."/>
            <person name="Feller G."/>
            <person name="Ho C."/>
            <person name="Mangenot S."/>
            <person name="Marino G."/>
            <person name="Nilsson J."/>
            <person name="Parrilli E."/>
            <person name="Rocha E.P.C."/>
            <person name="Rouy Z."/>
            <person name="Sekowska A."/>
            <person name="Tutino M.L."/>
            <person name="Vallenet D."/>
            <person name="von Heijne G."/>
            <person name="Danchin A."/>
        </authorList>
    </citation>
    <scope>NUCLEOTIDE SEQUENCE [LARGE SCALE GENOMIC DNA]</scope>
    <source>
        <strain>TAC 125</strain>
    </source>
</reference>
<dbReference type="EMBL" id="CR954246">
    <property type="protein sequence ID" value="CAI85248.1"/>
    <property type="molecule type" value="Genomic_DNA"/>
</dbReference>
<dbReference type="SMR" id="Q3IF25"/>
<dbReference type="STRING" id="326442.PSHAa0144"/>
<dbReference type="KEGG" id="pha:PSHAa0144"/>
<dbReference type="eggNOG" id="COG0087">
    <property type="taxonomic scope" value="Bacteria"/>
</dbReference>
<dbReference type="HOGENOM" id="CLU_044142_4_1_6"/>
<dbReference type="BioCyc" id="PHAL326442:PSHA_RS00735-MONOMER"/>
<dbReference type="Proteomes" id="UP000006843">
    <property type="component" value="Chromosome I"/>
</dbReference>
<dbReference type="GO" id="GO:0022625">
    <property type="term" value="C:cytosolic large ribosomal subunit"/>
    <property type="evidence" value="ECO:0007669"/>
    <property type="project" value="TreeGrafter"/>
</dbReference>
<dbReference type="GO" id="GO:0019843">
    <property type="term" value="F:rRNA binding"/>
    <property type="evidence" value="ECO:0007669"/>
    <property type="project" value="UniProtKB-UniRule"/>
</dbReference>
<dbReference type="GO" id="GO:0003735">
    <property type="term" value="F:structural constituent of ribosome"/>
    <property type="evidence" value="ECO:0007669"/>
    <property type="project" value="InterPro"/>
</dbReference>
<dbReference type="GO" id="GO:0006412">
    <property type="term" value="P:translation"/>
    <property type="evidence" value="ECO:0007669"/>
    <property type="project" value="UniProtKB-UniRule"/>
</dbReference>
<dbReference type="FunFam" id="2.40.30.10:FF:000004">
    <property type="entry name" value="50S ribosomal protein L3"/>
    <property type="match status" value="1"/>
</dbReference>
<dbReference type="FunFam" id="3.30.160.810:FF:000001">
    <property type="entry name" value="50S ribosomal protein L3"/>
    <property type="match status" value="1"/>
</dbReference>
<dbReference type="Gene3D" id="3.30.160.810">
    <property type="match status" value="1"/>
</dbReference>
<dbReference type="Gene3D" id="2.40.30.10">
    <property type="entry name" value="Translation factors"/>
    <property type="match status" value="1"/>
</dbReference>
<dbReference type="HAMAP" id="MF_01325_B">
    <property type="entry name" value="Ribosomal_uL3_B"/>
    <property type="match status" value="1"/>
</dbReference>
<dbReference type="InterPro" id="IPR000597">
    <property type="entry name" value="Ribosomal_uL3"/>
</dbReference>
<dbReference type="InterPro" id="IPR019927">
    <property type="entry name" value="Ribosomal_uL3_bac/org-type"/>
</dbReference>
<dbReference type="InterPro" id="IPR019926">
    <property type="entry name" value="Ribosomal_uL3_CS"/>
</dbReference>
<dbReference type="InterPro" id="IPR009000">
    <property type="entry name" value="Transl_B-barrel_sf"/>
</dbReference>
<dbReference type="NCBIfam" id="TIGR03625">
    <property type="entry name" value="L3_bact"/>
    <property type="match status" value="1"/>
</dbReference>
<dbReference type="PANTHER" id="PTHR11229">
    <property type="entry name" value="50S RIBOSOMAL PROTEIN L3"/>
    <property type="match status" value="1"/>
</dbReference>
<dbReference type="PANTHER" id="PTHR11229:SF16">
    <property type="entry name" value="LARGE RIBOSOMAL SUBUNIT PROTEIN UL3C"/>
    <property type="match status" value="1"/>
</dbReference>
<dbReference type="Pfam" id="PF00297">
    <property type="entry name" value="Ribosomal_L3"/>
    <property type="match status" value="1"/>
</dbReference>
<dbReference type="SUPFAM" id="SSF50447">
    <property type="entry name" value="Translation proteins"/>
    <property type="match status" value="1"/>
</dbReference>
<dbReference type="PROSITE" id="PS00474">
    <property type="entry name" value="RIBOSOMAL_L3"/>
    <property type="match status" value="1"/>
</dbReference>
<sequence length="211" mass="22182">MALGLVGRKVGMTRIFTEDGVSIPVTVIEATPNRIAQIKSEATDGYNALQVTAGTKKASRVNKASAGHFAKAGVEAGRGLWEFRLNGGEGDFEVGAELTVELFNEINKVDVTGTSKGKGFQGGVKRWNFSMQDATHGNSLSHRAPGSIGQNQSPGKVFKGKKMAGHMGAERVTTQNLELVRVDAERNLLLVKGAVPGAIGGDVIVKPAVKA</sequence>
<gene>
    <name evidence="1" type="primary">rplC</name>
    <name type="ordered locus">PSHAa0144</name>
</gene>
<keyword id="KW-0488">Methylation</keyword>
<keyword id="KW-1185">Reference proteome</keyword>
<keyword id="KW-0687">Ribonucleoprotein</keyword>
<keyword id="KW-0689">Ribosomal protein</keyword>
<keyword id="KW-0694">RNA-binding</keyword>
<keyword id="KW-0699">rRNA-binding</keyword>
<accession>Q3IF25</accession>